<dbReference type="EC" id="2.1.3.2" evidence="1"/>
<dbReference type="EMBL" id="BA000012">
    <property type="protein sequence ID" value="BAB48227.1"/>
    <property type="molecule type" value="Genomic_DNA"/>
</dbReference>
<dbReference type="RefSeq" id="WP_010909582.1">
    <property type="nucleotide sequence ID" value="NC_002678.2"/>
</dbReference>
<dbReference type="SMR" id="Q98M86"/>
<dbReference type="KEGG" id="mlo:mlr0686"/>
<dbReference type="PATRIC" id="fig|266835.9.peg.550"/>
<dbReference type="eggNOG" id="COG0540">
    <property type="taxonomic scope" value="Bacteria"/>
</dbReference>
<dbReference type="HOGENOM" id="CLU_043846_2_0_5"/>
<dbReference type="UniPathway" id="UPA00070">
    <property type="reaction ID" value="UER00116"/>
</dbReference>
<dbReference type="Proteomes" id="UP000000552">
    <property type="component" value="Chromosome"/>
</dbReference>
<dbReference type="GO" id="GO:0005829">
    <property type="term" value="C:cytosol"/>
    <property type="evidence" value="ECO:0007669"/>
    <property type="project" value="TreeGrafter"/>
</dbReference>
<dbReference type="GO" id="GO:0016597">
    <property type="term" value="F:amino acid binding"/>
    <property type="evidence" value="ECO:0007669"/>
    <property type="project" value="InterPro"/>
</dbReference>
<dbReference type="GO" id="GO:0004070">
    <property type="term" value="F:aspartate carbamoyltransferase activity"/>
    <property type="evidence" value="ECO:0007669"/>
    <property type="project" value="UniProtKB-UniRule"/>
</dbReference>
<dbReference type="GO" id="GO:0006207">
    <property type="term" value="P:'de novo' pyrimidine nucleobase biosynthetic process"/>
    <property type="evidence" value="ECO:0007669"/>
    <property type="project" value="InterPro"/>
</dbReference>
<dbReference type="GO" id="GO:0044205">
    <property type="term" value="P:'de novo' UMP biosynthetic process"/>
    <property type="evidence" value="ECO:0007669"/>
    <property type="project" value="UniProtKB-UniRule"/>
</dbReference>
<dbReference type="GO" id="GO:0006520">
    <property type="term" value="P:amino acid metabolic process"/>
    <property type="evidence" value="ECO:0007669"/>
    <property type="project" value="InterPro"/>
</dbReference>
<dbReference type="FunFam" id="3.40.50.1370:FF:000007">
    <property type="entry name" value="Aspartate carbamoyltransferase"/>
    <property type="match status" value="1"/>
</dbReference>
<dbReference type="Gene3D" id="3.40.50.1370">
    <property type="entry name" value="Aspartate/ornithine carbamoyltransferase"/>
    <property type="match status" value="2"/>
</dbReference>
<dbReference type="HAMAP" id="MF_00001">
    <property type="entry name" value="Asp_carb_tr"/>
    <property type="match status" value="1"/>
</dbReference>
<dbReference type="InterPro" id="IPR006132">
    <property type="entry name" value="Asp/Orn_carbamoyltranf_P-bd"/>
</dbReference>
<dbReference type="InterPro" id="IPR006130">
    <property type="entry name" value="Asp/Orn_carbamoylTrfase"/>
</dbReference>
<dbReference type="InterPro" id="IPR036901">
    <property type="entry name" value="Asp/Orn_carbamoylTrfase_sf"/>
</dbReference>
<dbReference type="InterPro" id="IPR002082">
    <property type="entry name" value="Asp_carbamoyltransf"/>
</dbReference>
<dbReference type="InterPro" id="IPR006131">
    <property type="entry name" value="Asp_carbamoyltransf_Asp/Orn-bd"/>
</dbReference>
<dbReference type="NCBIfam" id="TIGR00670">
    <property type="entry name" value="asp_carb_tr"/>
    <property type="match status" value="1"/>
</dbReference>
<dbReference type="NCBIfam" id="NF002032">
    <property type="entry name" value="PRK00856.1"/>
    <property type="match status" value="1"/>
</dbReference>
<dbReference type="PANTHER" id="PTHR45753:SF6">
    <property type="entry name" value="ASPARTATE CARBAMOYLTRANSFERASE"/>
    <property type="match status" value="1"/>
</dbReference>
<dbReference type="PANTHER" id="PTHR45753">
    <property type="entry name" value="ORNITHINE CARBAMOYLTRANSFERASE, MITOCHONDRIAL"/>
    <property type="match status" value="1"/>
</dbReference>
<dbReference type="Pfam" id="PF00185">
    <property type="entry name" value="OTCace"/>
    <property type="match status" value="1"/>
</dbReference>
<dbReference type="Pfam" id="PF02729">
    <property type="entry name" value="OTCace_N"/>
    <property type="match status" value="1"/>
</dbReference>
<dbReference type="PRINTS" id="PR00100">
    <property type="entry name" value="AOTCASE"/>
</dbReference>
<dbReference type="PRINTS" id="PR00101">
    <property type="entry name" value="ATCASE"/>
</dbReference>
<dbReference type="SUPFAM" id="SSF53671">
    <property type="entry name" value="Aspartate/ornithine carbamoyltransferase"/>
    <property type="match status" value="1"/>
</dbReference>
<dbReference type="PROSITE" id="PS00097">
    <property type="entry name" value="CARBAMOYLTRANSFERASE"/>
    <property type="match status" value="1"/>
</dbReference>
<organism>
    <name type="scientific">Mesorhizobium japonicum (strain LMG 29417 / CECT 9101 / MAFF 303099)</name>
    <name type="common">Mesorhizobium loti (strain MAFF 303099)</name>
    <dbReference type="NCBI Taxonomy" id="266835"/>
    <lineage>
        <taxon>Bacteria</taxon>
        <taxon>Pseudomonadati</taxon>
        <taxon>Pseudomonadota</taxon>
        <taxon>Alphaproteobacteria</taxon>
        <taxon>Hyphomicrobiales</taxon>
        <taxon>Phyllobacteriaceae</taxon>
        <taxon>Mesorhizobium</taxon>
    </lineage>
</organism>
<gene>
    <name evidence="1" type="primary">pyrB</name>
    <name type="ordered locus">mlr0686</name>
</gene>
<accession>Q98M86</accession>
<proteinExistence type="inferred from homology"/>
<evidence type="ECO:0000255" key="1">
    <source>
        <dbReference type="HAMAP-Rule" id="MF_00001"/>
    </source>
</evidence>
<protein>
    <recommendedName>
        <fullName evidence="1">Aspartate carbamoyltransferase catalytic subunit</fullName>
        <ecNumber evidence="1">2.1.3.2</ecNumber>
    </recommendedName>
    <alternativeName>
        <fullName evidence="1">Aspartate transcarbamylase</fullName>
        <shortName evidence="1">ATCase</shortName>
    </alternativeName>
</protein>
<sequence length="326" mass="35213">MTDASSLPLYPHRHLLGISDLSPADIELLLDRADRAVAISRQSEKKTSTLRGRTQINLFYEASTRTQSSFELAGKRLGADVMNMSVASSSVKKGETLIDTAMTLNAMRPDILIIRHQSAGAAALLAQKVGCSVVNAGDGAHEHPTQALLDALTIRRAKGPLSKLIVAICGDILHSRVARSNIMLLNALGAQVRVVAPSTLLPSGIEKMGVIVTRSMAEGLKDADVVMMLRLQRERMEGAFVPSVREYFRYFGLDAEKLKAAKGDALVMHPGPMNRGVEIASEIADGPQSVIQEQVEMGVAVRMAVMEALLDPRRNQEGRKQEGRGA</sequence>
<feature type="chain" id="PRO_0000113183" description="Aspartate carbamoyltransferase catalytic subunit">
    <location>
        <begin position="1"/>
        <end position="326"/>
    </location>
</feature>
<feature type="binding site" evidence="1">
    <location>
        <position position="65"/>
    </location>
    <ligand>
        <name>carbamoyl phosphate</name>
        <dbReference type="ChEBI" id="CHEBI:58228"/>
    </ligand>
</feature>
<feature type="binding site" evidence="1">
    <location>
        <position position="66"/>
    </location>
    <ligand>
        <name>carbamoyl phosphate</name>
        <dbReference type="ChEBI" id="CHEBI:58228"/>
    </ligand>
</feature>
<feature type="binding site" evidence="1">
    <location>
        <position position="93"/>
    </location>
    <ligand>
        <name>L-aspartate</name>
        <dbReference type="ChEBI" id="CHEBI:29991"/>
    </ligand>
</feature>
<feature type="binding site" evidence="1">
    <location>
        <position position="115"/>
    </location>
    <ligand>
        <name>carbamoyl phosphate</name>
        <dbReference type="ChEBI" id="CHEBI:58228"/>
    </ligand>
</feature>
<feature type="binding site" evidence="1">
    <location>
        <position position="143"/>
    </location>
    <ligand>
        <name>carbamoyl phosphate</name>
        <dbReference type="ChEBI" id="CHEBI:58228"/>
    </ligand>
</feature>
<feature type="binding site" evidence="1">
    <location>
        <position position="146"/>
    </location>
    <ligand>
        <name>carbamoyl phosphate</name>
        <dbReference type="ChEBI" id="CHEBI:58228"/>
    </ligand>
</feature>
<feature type="binding site" evidence="1">
    <location>
        <position position="176"/>
    </location>
    <ligand>
        <name>L-aspartate</name>
        <dbReference type="ChEBI" id="CHEBI:29991"/>
    </ligand>
</feature>
<feature type="binding site" evidence="1">
    <location>
        <position position="230"/>
    </location>
    <ligand>
        <name>L-aspartate</name>
        <dbReference type="ChEBI" id="CHEBI:29991"/>
    </ligand>
</feature>
<feature type="binding site" evidence="1">
    <location>
        <position position="271"/>
    </location>
    <ligand>
        <name>carbamoyl phosphate</name>
        <dbReference type="ChEBI" id="CHEBI:58228"/>
    </ligand>
</feature>
<feature type="binding site" evidence="1">
    <location>
        <position position="272"/>
    </location>
    <ligand>
        <name>carbamoyl phosphate</name>
        <dbReference type="ChEBI" id="CHEBI:58228"/>
    </ligand>
</feature>
<name>PYRB_RHILO</name>
<keyword id="KW-0665">Pyrimidine biosynthesis</keyword>
<keyword id="KW-0808">Transferase</keyword>
<comment type="function">
    <text evidence="1">Catalyzes the condensation of carbamoyl phosphate and aspartate to form carbamoyl aspartate and inorganic phosphate, the committed step in the de novo pyrimidine nucleotide biosynthesis pathway.</text>
</comment>
<comment type="catalytic activity">
    <reaction evidence="1">
        <text>carbamoyl phosphate + L-aspartate = N-carbamoyl-L-aspartate + phosphate + H(+)</text>
        <dbReference type="Rhea" id="RHEA:20013"/>
        <dbReference type="ChEBI" id="CHEBI:15378"/>
        <dbReference type="ChEBI" id="CHEBI:29991"/>
        <dbReference type="ChEBI" id="CHEBI:32814"/>
        <dbReference type="ChEBI" id="CHEBI:43474"/>
        <dbReference type="ChEBI" id="CHEBI:58228"/>
        <dbReference type="EC" id="2.1.3.2"/>
    </reaction>
</comment>
<comment type="pathway">
    <text evidence="1">Pyrimidine metabolism; UMP biosynthesis via de novo pathway; (S)-dihydroorotate from bicarbonate: step 2/3.</text>
</comment>
<comment type="subunit">
    <text evidence="1">Heterododecamer (2C3:3R2) of six catalytic PyrB chains organized as two trimers (C3), and six regulatory PyrI chains organized as three dimers (R2).</text>
</comment>
<comment type="similarity">
    <text evidence="1">Belongs to the aspartate/ornithine carbamoyltransferase superfamily. ATCase family.</text>
</comment>
<reference key="1">
    <citation type="journal article" date="2000" name="DNA Res.">
        <title>Complete genome structure of the nitrogen-fixing symbiotic bacterium Mesorhizobium loti.</title>
        <authorList>
            <person name="Kaneko T."/>
            <person name="Nakamura Y."/>
            <person name="Sato S."/>
            <person name="Asamizu E."/>
            <person name="Kato T."/>
            <person name="Sasamoto S."/>
            <person name="Watanabe A."/>
            <person name="Idesawa K."/>
            <person name="Ishikawa A."/>
            <person name="Kawashima K."/>
            <person name="Kimura T."/>
            <person name="Kishida Y."/>
            <person name="Kiyokawa C."/>
            <person name="Kohara M."/>
            <person name="Matsumoto M."/>
            <person name="Matsuno A."/>
            <person name="Mochizuki Y."/>
            <person name="Nakayama S."/>
            <person name="Nakazaki N."/>
            <person name="Shimpo S."/>
            <person name="Sugimoto M."/>
            <person name="Takeuchi C."/>
            <person name="Yamada M."/>
            <person name="Tabata S."/>
        </authorList>
    </citation>
    <scope>NUCLEOTIDE SEQUENCE [LARGE SCALE GENOMIC DNA]</scope>
    <source>
        <strain>LMG 29417 / CECT 9101 / MAFF 303099</strain>
    </source>
</reference>